<gene>
    <name evidence="1" type="primary">nusG</name>
    <name type="ordered locus">SAOUHSC_00517</name>
</gene>
<name>NUSG_STAA8</name>
<accession>Q2G0P2</accession>
<accession>O08386</accession>
<accession>P0A098</accession>
<protein>
    <recommendedName>
        <fullName evidence="1">Transcription termination/antitermination protein NusG</fullName>
    </recommendedName>
</protein>
<feature type="chain" id="PRO_0000247943" description="Transcription termination/antitermination protein NusG">
    <location>
        <begin position="1"/>
        <end position="182"/>
    </location>
</feature>
<feature type="domain" description="KOW" evidence="1">
    <location>
        <begin position="131"/>
        <end position="163"/>
    </location>
</feature>
<organism>
    <name type="scientific">Staphylococcus aureus (strain NCTC 8325 / PS 47)</name>
    <dbReference type="NCBI Taxonomy" id="93061"/>
    <lineage>
        <taxon>Bacteria</taxon>
        <taxon>Bacillati</taxon>
        <taxon>Bacillota</taxon>
        <taxon>Bacilli</taxon>
        <taxon>Bacillales</taxon>
        <taxon>Staphylococcaceae</taxon>
        <taxon>Staphylococcus</taxon>
    </lineage>
</organism>
<keyword id="KW-1185">Reference proteome</keyword>
<keyword id="KW-0804">Transcription</keyword>
<keyword id="KW-0889">Transcription antitermination</keyword>
<keyword id="KW-0805">Transcription regulation</keyword>
<keyword id="KW-0806">Transcription termination</keyword>
<comment type="function">
    <text evidence="1">Participates in transcription elongation, termination and antitermination.</text>
</comment>
<comment type="similarity">
    <text evidence="1">Belongs to the NusG family.</text>
</comment>
<evidence type="ECO:0000255" key="1">
    <source>
        <dbReference type="HAMAP-Rule" id="MF_00948"/>
    </source>
</evidence>
<sequence>MSEEVGAKRWYAVHTYSGYENKVKKNLEKRVESMNMTEQIFRVVIPEEEETQVKDGKAKTTVKKTFPGYVLVELIMTDESWYVVRNTPGVTGFVGSAGAGSKPNPLLPEEVRFILKQMGLKEKTIDVELEVGEQVRIKSGPFANQVGEVQEIETDKFKLTVLVDMFGRETPVEVEFDQIEKL</sequence>
<proteinExistence type="inferred from homology"/>
<reference key="1">
    <citation type="submission" date="1997-05" db="EMBL/GenBank/DDBJ databases">
        <authorList>
            <person name="Segarra R.A."/>
            <person name="Iandolo J.J."/>
        </authorList>
    </citation>
    <scope>NUCLEOTIDE SEQUENCE [GENOMIC DNA]</scope>
</reference>
<reference key="2">
    <citation type="book" date="2006" name="Gram positive pathogens, 2nd edition">
        <title>The Staphylococcus aureus NCTC 8325 genome.</title>
        <editorList>
            <person name="Fischetti V."/>
            <person name="Novick R."/>
            <person name="Ferretti J."/>
            <person name="Portnoy D."/>
            <person name="Rood J."/>
        </editorList>
        <authorList>
            <person name="Gillaspy A.F."/>
            <person name="Worrell V."/>
            <person name="Orvis J."/>
            <person name="Roe B.A."/>
            <person name="Dyer D.W."/>
            <person name="Iandolo J.J."/>
        </authorList>
    </citation>
    <scope>NUCLEOTIDE SEQUENCE [LARGE SCALE GENOMIC DNA]</scope>
    <source>
        <strain>NCTC 8325 / PS 47</strain>
    </source>
</reference>
<dbReference type="EMBL" id="U96619">
    <property type="protein sequence ID" value="AAB54018.1"/>
    <property type="molecule type" value="Genomic_DNA"/>
</dbReference>
<dbReference type="EMBL" id="CP000253">
    <property type="protein sequence ID" value="ABD29666.1"/>
    <property type="molecule type" value="Genomic_DNA"/>
</dbReference>
<dbReference type="RefSeq" id="WP_001288302.1">
    <property type="nucleotide sequence ID" value="NZ_LS483365.1"/>
</dbReference>
<dbReference type="RefSeq" id="YP_499090.1">
    <property type="nucleotide sequence ID" value="NC_007795.1"/>
</dbReference>
<dbReference type="SMR" id="Q2G0P2"/>
<dbReference type="STRING" id="93061.SAOUHSC_00517"/>
<dbReference type="PaxDb" id="1280-SAXN108_0590"/>
<dbReference type="GeneID" id="3920371"/>
<dbReference type="KEGG" id="sao:SAOUHSC_00517"/>
<dbReference type="PATRIC" id="fig|93061.5.peg.464"/>
<dbReference type="eggNOG" id="COG0250">
    <property type="taxonomic scope" value="Bacteria"/>
</dbReference>
<dbReference type="HOGENOM" id="CLU_067287_1_1_9"/>
<dbReference type="OrthoDB" id="9809075at2"/>
<dbReference type="PRO" id="PR:Q2G0P2"/>
<dbReference type="Proteomes" id="UP000008816">
    <property type="component" value="Chromosome"/>
</dbReference>
<dbReference type="GO" id="GO:0005829">
    <property type="term" value="C:cytosol"/>
    <property type="evidence" value="ECO:0000318"/>
    <property type="project" value="GO_Central"/>
</dbReference>
<dbReference type="GO" id="GO:0006353">
    <property type="term" value="P:DNA-templated transcription termination"/>
    <property type="evidence" value="ECO:0007669"/>
    <property type="project" value="UniProtKB-UniRule"/>
</dbReference>
<dbReference type="GO" id="GO:0032784">
    <property type="term" value="P:regulation of DNA-templated transcription elongation"/>
    <property type="evidence" value="ECO:0007669"/>
    <property type="project" value="InterPro"/>
</dbReference>
<dbReference type="GO" id="GO:0031564">
    <property type="term" value="P:transcription antitermination"/>
    <property type="evidence" value="ECO:0007669"/>
    <property type="project" value="UniProtKB-UniRule"/>
</dbReference>
<dbReference type="GO" id="GO:0140673">
    <property type="term" value="P:transcription elongation-coupled chromatin remodeling"/>
    <property type="evidence" value="ECO:0007669"/>
    <property type="project" value="InterPro"/>
</dbReference>
<dbReference type="CDD" id="cd06091">
    <property type="entry name" value="KOW_NusG"/>
    <property type="match status" value="1"/>
</dbReference>
<dbReference type="CDD" id="cd09891">
    <property type="entry name" value="NGN_Bact_1"/>
    <property type="match status" value="1"/>
</dbReference>
<dbReference type="FunFam" id="2.30.30.30:FF:000002">
    <property type="entry name" value="Transcription termination/antitermination factor NusG"/>
    <property type="match status" value="1"/>
</dbReference>
<dbReference type="FunFam" id="3.30.70.940:FF:000002">
    <property type="entry name" value="Transcription termination/antitermination protein NusG"/>
    <property type="match status" value="1"/>
</dbReference>
<dbReference type="Gene3D" id="2.30.30.30">
    <property type="match status" value="1"/>
</dbReference>
<dbReference type="Gene3D" id="3.30.70.940">
    <property type="entry name" value="NusG, N-terminal domain"/>
    <property type="match status" value="1"/>
</dbReference>
<dbReference type="HAMAP" id="MF_00948">
    <property type="entry name" value="NusG"/>
    <property type="match status" value="1"/>
</dbReference>
<dbReference type="InterPro" id="IPR005824">
    <property type="entry name" value="KOW"/>
</dbReference>
<dbReference type="InterPro" id="IPR047050">
    <property type="entry name" value="NGN"/>
</dbReference>
<dbReference type="InterPro" id="IPR006645">
    <property type="entry name" value="NGN-like_dom"/>
</dbReference>
<dbReference type="InterPro" id="IPR036735">
    <property type="entry name" value="NGN_dom_sf"/>
</dbReference>
<dbReference type="InterPro" id="IPR043425">
    <property type="entry name" value="NusG-like"/>
</dbReference>
<dbReference type="InterPro" id="IPR014722">
    <property type="entry name" value="Rib_uL2_dom2"/>
</dbReference>
<dbReference type="InterPro" id="IPR001062">
    <property type="entry name" value="Transcrpt_antiterm_NusG"/>
</dbReference>
<dbReference type="InterPro" id="IPR015869">
    <property type="entry name" value="Transcrpt_antiterm_NusG_bac_CS"/>
</dbReference>
<dbReference type="InterPro" id="IPR008991">
    <property type="entry name" value="Translation_prot_SH3-like_sf"/>
</dbReference>
<dbReference type="NCBIfam" id="TIGR00922">
    <property type="entry name" value="nusG"/>
    <property type="match status" value="1"/>
</dbReference>
<dbReference type="PANTHER" id="PTHR30265">
    <property type="entry name" value="RHO-INTERACTING TRANSCRIPTION TERMINATION FACTOR NUSG"/>
    <property type="match status" value="1"/>
</dbReference>
<dbReference type="PANTHER" id="PTHR30265:SF2">
    <property type="entry name" value="TRANSCRIPTION TERMINATION_ANTITERMINATION PROTEIN NUSG"/>
    <property type="match status" value="1"/>
</dbReference>
<dbReference type="Pfam" id="PF00467">
    <property type="entry name" value="KOW"/>
    <property type="match status" value="1"/>
</dbReference>
<dbReference type="Pfam" id="PF02357">
    <property type="entry name" value="NusG"/>
    <property type="match status" value="1"/>
</dbReference>
<dbReference type="PRINTS" id="PR00338">
    <property type="entry name" value="NUSGTNSCPFCT"/>
</dbReference>
<dbReference type="SMART" id="SM00739">
    <property type="entry name" value="KOW"/>
    <property type="match status" value="1"/>
</dbReference>
<dbReference type="SMART" id="SM00738">
    <property type="entry name" value="NGN"/>
    <property type="match status" value="1"/>
</dbReference>
<dbReference type="SUPFAM" id="SSF82679">
    <property type="entry name" value="N-utilization substance G protein NusG, N-terminal domain"/>
    <property type="match status" value="1"/>
</dbReference>
<dbReference type="SUPFAM" id="SSF50104">
    <property type="entry name" value="Translation proteins SH3-like domain"/>
    <property type="match status" value="1"/>
</dbReference>
<dbReference type="PROSITE" id="PS01014">
    <property type="entry name" value="NUSG"/>
    <property type="match status" value="1"/>
</dbReference>